<sequence length="311" mass="35145">MSSQNAKSIGGILETSTVPLVIQPQIVNDPAQNNITLPITLCAVCGDTSNGNHYGVPTCFGCSGFFRRTVRNKLVHGCWNGDGNCVIDKANRNRCKSCRIKKCFKKGMNKNAVQPERTSHSYTVEYVELPSFREYSKGLLPTHSDRLRFQHEHAQHEIDTSSVLVHLKNALQWVQQFSLFAVLSDVEKSQIILTQWPHLLCLALFENSEKIFIDEKFAQLAEKFKSLELSAQDYFLLKGIIIFTETKDGTDLKFDRQLDICIGLLNQLHLESSKSKSGRLLFLLGELKSYSTRQLESLLDLKACEIVISFL</sequence>
<gene>
    <name type="primary">nhr-111</name>
    <name type="ORF">F44G3.9</name>
</gene>
<organism>
    <name type="scientific">Caenorhabditis elegans</name>
    <dbReference type="NCBI Taxonomy" id="6239"/>
    <lineage>
        <taxon>Eukaryota</taxon>
        <taxon>Metazoa</taxon>
        <taxon>Ecdysozoa</taxon>
        <taxon>Nematoda</taxon>
        <taxon>Chromadorea</taxon>
        <taxon>Rhabditida</taxon>
        <taxon>Rhabditina</taxon>
        <taxon>Rhabditomorpha</taxon>
        <taxon>Rhabditoidea</taxon>
        <taxon>Rhabditidae</taxon>
        <taxon>Peloderinae</taxon>
        <taxon>Caenorhabditis</taxon>
    </lineage>
</organism>
<accession>O45521</accession>
<name>NH111_CAEEL</name>
<proteinExistence type="evidence at protein level"/>
<dbReference type="EMBL" id="Z83109">
    <property type="protein sequence ID" value="CAB05521.2"/>
    <property type="molecule type" value="Genomic_DNA"/>
</dbReference>
<dbReference type="PIR" id="T22203">
    <property type="entry name" value="T22203"/>
</dbReference>
<dbReference type="RefSeq" id="NP_507060.2">
    <property type="nucleotide sequence ID" value="NM_074659.3"/>
</dbReference>
<dbReference type="SMR" id="O45521"/>
<dbReference type="BioGRID" id="50516">
    <property type="interactions" value="138"/>
</dbReference>
<dbReference type="DIP" id="DIP-26766N"/>
<dbReference type="IntAct" id="O45521">
    <property type="interactions" value="98"/>
</dbReference>
<dbReference type="STRING" id="6239.F44G3.9.1"/>
<dbReference type="PaxDb" id="6239-F44G3.9"/>
<dbReference type="EnsemblMetazoa" id="F44G3.9.1">
    <property type="protein sequence ID" value="F44G3.9.1"/>
    <property type="gene ID" value="WBGene00003701"/>
</dbReference>
<dbReference type="GeneID" id="185757"/>
<dbReference type="KEGG" id="cel:CELE_F44G3.9"/>
<dbReference type="UCSC" id="F44G3.9">
    <property type="organism name" value="c. elegans"/>
</dbReference>
<dbReference type="AGR" id="WB:WBGene00003701"/>
<dbReference type="CTD" id="185757"/>
<dbReference type="WormBase" id="F44G3.9">
    <property type="protein sequence ID" value="CE35538"/>
    <property type="gene ID" value="WBGene00003701"/>
    <property type="gene designation" value="nhr-111"/>
</dbReference>
<dbReference type="eggNOG" id="KOG3575">
    <property type="taxonomic scope" value="Eukaryota"/>
</dbReference>
<dbReference type="GeneTree" id="ENSGT00940000156926"/>
<dbReference type="HOGENOM" id="CLU_007368_9_0_1"/>
<dbReference type="InParanoid" id="O45521"/>
<dbReference type="OMA" id="QWIRILL"/>
<dbReference type="OrthoDB" id="5771769at2759"/>
<dbReference type="PhylomeDB" id="O45521"/>
<dbReference type="SignaLink" id="O45521"/>
<dbReference type="PRO" id="PR:O45521"/>
<dbReference type="Proteomes" id="UP000001940">
    <property type="component" value="Chromosome V"/>
</dbReference>
<dbReference type="Bgee" id="WBGene00003701">
    <property type="expression patterns" value="Expressed in embryo"/>
</dbReference>
<dbReference type="GO" id="GO:0005634">
    <property type="term" value="C:nucleus"/>
    <property type="evidence" value="ECO:0007669"/>
    <property type="project" value="UniProtKB-SubCell"/>
</dbReference>
<dbReference type="GO" id="GO:0004879">
    <property type="term" value="F:nuclear receptor activity"/>
    <property type="evidence" value="ECO:0000318"/>
    <property type="project" value="GO_Central"/>
</dbReference>
<dbReference type="GO" id="GO:0000978">
    <property type="term" value="F:RNA polymerase II cis-regulatory region sequence-specific DNA binding"/>
    <property type="evidence" value="ECO:0000318"/>
    <property type="project" value="GO_Central"/>
</dbReference>
<dbReference type="GO" id="GO:0008270">
    <property type="term" value="F:zinc ion binding"/>
    <property type="evidence" value="ECO:0007669"/>
    <property type="project" value="UniProtKB-KW"/>
</dbReference>
<dbReference type="GO" id="GO:0030182">
    <property type="term" value="P:neuron differentiation"/>
    <property type="evidence" value="ECO:0000318"/>
    <property type="project" value="GO_Central"/>
</dbReference>
<dbReference type="GO" id="GO:0045944">
    <property type="term" value="P:positive regulation of transcription by RNA polymerase II"/>
    <property type="evidence" value="ECO:0000318"/>
    <property type="project" value="GO_Central"/>
</dbReference>
<dbReference type="CDD" id="cd06916">
    <property type="entry name" value="NR_DBD_like"/>
    <property type="match status" value="1"/>
</dbReference>
<dbReference type="FunFam" id="3.30.50.10:FF:000070">
    <property type="entry name" value="Nuclear hormone receptor family member nhr-2"/>
    <property type="match status" value="1"/>
</dbReference>
<dbReference type="Gene3D" id="3.30.50.10">
    <property type="entry name" value="Erythroid Transcription Factor GATA-1, subunit A"/>
    <property type="match status" value="1"/>
</dbReference>
<dbReference type="Gene3D" id="1.10.565.10">
    <property type="entry name" value="Retinoid X Receptor"/>
    <property type="match status" value="1"/>
</dbReference>
<dbReference type="InterPro" id="IPR035500">
    <property type="entry name" value="NHR-like_dom_sf"/>
</dbReference>
<dbReference type="InterPro" id="IPR000536">
    <property type="entry name" value="Nucl_hrmn_rcpt_lig-bd"/>
</dbReference>
<dbReference type="InterPro" id="IPR050274">
    <property type="entry name" value="Nuclear_hormone_rcpt_NR2"/>
</dbReference>
<dbReference type="InterPro" id="IPR001723">
    <property type="entry name" value="Nuclear_hrmn_rcpt"/>
</dbReference>
<dbReference type="InterPro" id="IPR001628">
    <property type="entry name" value="Znf_hrmn_rcpt"/>
</dbReference>
<dbReference type="InterPro" id="IPR013088">
    <property type="entry name" value="Znf_NHR/GATA"/>
</dbReference>
<dbReference type="PANTHER" id="PTHR24083">
    <property type="entry name" value="NUCLEAR HORMONE RECEPTOR"/>
    <property type="match status" value="1"/>
</dbReference>
<dbReference type="Pfam" id="PF00105">
    <property type="entry name" value="zf-C4"/>
    <property type="match status" value="1"/>
</dbReference>
<dbReference type="PRINTS" id="PR00398">
    <property type="entry name" value="STRDHORMONER"/>
</dbReference>
<dbReference type="PRINTS" id="PR00047">
    <property type="entry name" value="STROIDFINGER"/>
</dbReference>
<dbReference type="SMART" id="SM00399">
    <property type="entry name" value="ZnF_C4"/>
    <property type="match status" value="1"/>
</dbReference>
<dbReference type="SUPFAM" id="SSF57716">
    <property type="entry name" value="Glucocorticoid receptor-like (DNA-binding domain)"/>
    <property type="match status" value="1"/>
</dbReference>
<dbReference type="SUPFAM" id="SSF48508">
    <property type="entry name" value="Nuclear receptor ligand-binding domain"/>
    <property type="match status" value="1"/>
</dbReference>
<dbReference type="PROSITE" id="PS51843">
    <property type="entry name" value="NR_LBD"/>
    <property type="match status" value="1"/>
</dbReference>
<dbReference type="PROSITE" id="PS00031">
    <property type="entry name" value="NUCLEAR_REC_DBD_1"/>
    <property type="match status" value="1"/>
</dbReference>
<dbReference type="PROSITE" id="PS51030">
    <property type="entry name" value="NUCLEAR_REC_DBD_2"/>
    <property type="match status" value="1"/>
</dbReference>
<feature type="chain" id="PRO_0000223589" description="Nuclear hormone receptor family member nhr-111">
    <location>
        <begin position="1"/>
        <end position="311"/>
    </location>
</feature>
<feature type="domain" description="NR LBD" evidence="2">
    <location>
        <begin position="116"/>
        <end position="311"/>
    </location>
</feature>
<feature type="DNA-binding region" description="Nuclear receptor" evidence="1">
    <location>
        <begin position="39"/>
        <end position="115"/>
    </location>
</feature>
<feature type="zinc finger region" description="NR C4-type" evidence="1">
    <location>
        <begin position="42"/>
        <end position="62"/>
    </location>
</feature>
<feature type="zinc finger region" description="NR C4-type" evidence="1">
    <location>
        <begin position="78"/>
        <end position="98"/>
    </location>
</feature>
<keyword id="KW-0238">DNA-binding</keyword>
<keyword id="KW-0479">Metal-binding</keyword>
<keyword id="KW-0539">Nucleus</keyword>
<keyword id="KW-0675">Receptor</keyword>
<keyword id="KW-1185">Reference proteome</keyword>
<keyword id="KW-0804">Transcription</keyword>
<keyword id="KW-0805">Transcription regulation</keyword>
<keyword id="KW-0862">Zinc</keyword>
<keyword id="KW-0863">Zinc-finger</keyword>
<protein>
    <recommendedName>
        <fullName>Nuclear hormone receptor family member nhr-111</fullName>
    </recommendedName>
</protein>
<reference key="1">
    <citation type="journal article" date="1998" name="Science">
        <title>Genome sequence of the nematode C. elegans: a platform for investigating biology.</title>
        <authorList>
            <consortium name="The C. elegans sequencing consortium"/>
        </authorList>
    </citation>
    <scope>NUCLEOTIDE SEQUENCE [LARGE SCALE GENOMIC DNA]</scope>
    <source>
        <strain>Bristol N2</strain>
    </source>
</reference>
<comment type="function">
    <text>Orphan nuclear receptor.</text>
</comment>
<comment type="interaction">
    <interactant intactId="EBI-313236">
        <id>O45521</id>
    </interactant>
    <interactant intactId="EBI-327317">
        <id>O16519</id>
        <label>gad-1</label>
    </interactant>
    <organismsDiffer>false</organismsDiffer>
    <experiments>3</experiments>
</comment>
<comment type="interaction">
    <interactant intactId="EBI-313236">
        <id>O45521</id>
    </interactant>
    <interactant intactId="EBI-321323">
        <id>Q93701</id>
        <label>gst-19</label>
    </interactant>
    <organismsDiffer>false</organismsDiffer>
    <experiments>3</experiments>
</comment>
<comment type="interaction">
    <interactant intactId="EBI-313236">
        <id>O45521</id>
    </interactant>
    <interactant intactId="EBI-325404">
        <id>Q95Y97</id>
        <label>rpa-2</label>
    </interactant>
    <organismsDiffer>false</organismsDiffer>
    <experiments>3</experiments>
</comment>
<comment type="interaction">
    <interactant intactId="EBI-313236">
        <id>O45521</id>
    </interactant>
    <interactant intactId="EBI-322494">
        <id>Q9TZI2</id>
        <label>ztf-4</label>
    </interactant>
    <organismsDiffer>false</organismsDiffer>
    <experiments>3</experiments>
</comment>
<comment type="subcellular location">
    <subcellularLocation>
        <location evidence="1">Nucleus</location>
    </subcellularLocation>
</comment>
<comment type="similarity">
    <text evidence="3">Belongs to the nuclear hormone receptor family.</text>
</comment>
<evidence type="ECO:0000255" key="1">
    <source>
        <dbReference type="PROSITE-ProRule" id="PRU00407"/>
    </source>
</evidence>
<evidence type="ECO:0000255" key="2">
    <source>
        <dbReference type="PROSITE-ProRule" id="PRU01189"/>
    </source>
</evidence>
<evidence type="ECO:0000305" key="3"/>